<feature type="chain" id="PRO_0000067055" description="NF-kappa-B inhibitor cactus">
    <location>
        <begin position="1"/>
        <end position="500"/>
    </location>
</feature>
<feature type="repeat" description="ANK 1">
    <location>
        <begin position="229"/>
        <end position="261"/>
    </location>
</feature>
<feature type="repeat" description="ANK 2">
    <location>
        <begin position="265"/>
        <end position="294"/>
    </location>
</feature>
<feature type="repeat" description="ANK 3">
    <location>
        <begin position="298"/>
        <end position="327"/>
    </location>
</feature>
<feature type="repeat" description="ANK 4">
    <location>
        <begin position="361"/>
        <end position="390"/>
    </location>
</feature>
<feature type="repeat" description="ANK 5">
    <location>
        <begin position="395"/>
        <end position="424"/>
    </location>
</feature>
<feature type="region of interest" description="Disordered" evidence="2">
    <location>
        <begin position="1"/>
        <end position="148"/>
    </location>
</feature>
<feature type="region of interest" description="Disordered" evidence="2">
    <location>
        <begin position="171"/>
        <end position="212"/>
    </location>
</feature>
<feature type="compositionally biased region" description="Low complexity" evidence="2">
    <location>
        <begin position="1"/>
        <end position="43"/>
    </location>
</feature>
<feature type="compositionally biased region" description="Polar residues" evidence="2">
    <location>
        <begin position="69"/>
        <end position="86"/>
    </location>
</feature>
<feature type="compositionally biased region" description="Acidic residues" evidence="2">
    <location>
        <begin position="118"/>
        <end position="130"/>
    </location>
</feature>
<feature type="compositionally biased region" description="Polar residues" evidence="2">
    <location>
        <begin position="171"/>
        <end position="189"/>
    </location>
</feature>
<feature type="compositionally biased region" description="Low complexity" evidence="2">
    <location>
        <begin position="190"/>
        <end position="212"/>
    </location>
</feature>
<feature type="modified residue" description="Phosphoserine; by PKC" evidence="1">
    <location>
        <position position="45"/>
    </location>
</feature>
<feature type="modified residue" description="Phosphoserine; by PKC" evidence="1">
    <location>
        <position position="144"/>
    </location>
</feature>
<feature type="modified residue" description="Phosphothreonine; by PKC" evidence="1">
    <location>
        <position position="183"/>
    </location>
</feature>
<feature type="modified residue" description="Phosphothreonine; by PKC" evidence="1">
    <location>
        <position position="293"/>
    </location>
</feature>
<feature type="modified residue" description="Phosphothreonine; by PKC" evidence="1">
    <location>
        <position position="319"/>
    </location>
</feature>
<feature type="modified residue" description="Phosphoserine; by PKC" evidence="1">
    <location>
        <position position="395"/>
    </location>
</feature>
<feature type="splice variant" id="VSP_000286" description="In isoform C." evidence="8">
    <original>MYDRFGDPRYFVSYNGGNPMTVA</original>
    <variation>VSVTA</variation>
    <location>
        <begin position="478"/>
        <end position="500"/>
    </location>
</feature>
<feature type="sequence conflict" description="In Ref. 1; AAA85908 and 2; AAA28407." evidence="8" ref="1 2">
    <original>A</original>
    <variation>G</variation>
    <location>
        <position position="196"/>
    </location>
</feature>
<feature type="sequence conflict" description="In Ref. 2; AAA28407." evidence="8" ref="2">
    <original>Q</original>
    <variation>R</variation>
    <location>
        <position position="222"/>
    </location>
</feature>
<keyword id="KW-0025">Alternative splicing</keyword>
<keyword id="KW-0040">ANK repeat</keyword>
<keyword id="KW-0963">Cytoplasm</keyword>
<keyword id="KW-0217">Developmental protein</keyword>
<keyword id="KW-0597">Phosphoprotein</keyword>
<keyword id="KW-1185">Reference proteome</keyword>
<keyword id="KW-0677">Repeat</keyword>
<protein>
    <recommendedName>
        <fullName>NF-kappa-B inhibitor cactus</fullName>
    </recommendedName>
</protein>
<dbReference type="EMBL" id="L04964">
    <property type="protein sequence ID" value="AAA85908.1"/>
    <property type="molecule type" value="mRNA"/>
</dbReference>
<dbReference type="EMBL" id="L03367">
    <property type="protein sequence ID" value="AAA28407.1"/>
    <property type="molecule type" value="Genomic_DNA"/>
</dbReference>
<dbReference type="EMBL" id="L03368">
    <property type="protein sequence ID" value="AAA28408.1"/>
    <property type="molecule type" value="Genomic_DNA"/>
</dbReference>
<dbReference type="EMBL" id="AE014134">
    <property type="protein sequence ID" value="AAN10936.1"/>
    <property type="molecule type" value="Genomic_DNA"/>
</dbReference>
<dbReference type="EMBL" id="AE014134">
    <property type="protein sequence ID" value="AAN10937.1"/>
    <property type="molecule type" value="Genomic_DNA"/>
</dbReference>
<dbReference type="EMBL" id="AE014134">
    <property type="protein sequence ID" value="AAS64714.1"/>
    <property type="molecule type" value="Genomic_DNA"/>
</dbReference>
<dbReference type="EMBL" id="AY069399">
    <property type="protein sequence ID" value="AAL39544.1"/>
    <property type="molecule type" value="mRNA"/>
</dbReference>
<dbReference type="PIR" id="A44269">
    <property type="entry name" value="A44269"/>
</dbReference>
<dbReference type="PIR" id="B44268">
    <property type="entry name" value="B44268"/>
</dbReference>
<dbReference type="RefSeq" id="NP_001260496.1">
    <molecule id="Q03017-1"/>
    <property type="nucleotide sequence ID" value="NM_001273567.1"/>
</dbReference>
<dbReference type="RefSeq" id="NP_476942.1">
    <molecule id="Q03017-1"/>
    <property type="nucleotide sequence ID" value="NM_057594.4"/>
</dbReference>
<dbReference type="RefSeq" id="NP_476943.1">
    <molecule id="Q03017-2"/>
    <property type="nucleotide sequence ID" value="NM_057595.4"/>
</dbReference>
<dbReference type="RefSeq" id="NP_723960.1">
    <molecule id="Q03017-1"/>
    <property type="nucleotide sequence ID" value="NM_165152.2"/>
</dbReference>
<dbReference type="RefSeq" id="NP_995721.1">
    <molecule id="Q03017-1"/>
    <property type="nucleotide sequence ID" value="NM_205999.2"/>
</dbReference>
<dbReference type="SMR" id="Q03017"/>
<dbReference type="BioGRID" id="60980">
    <property type="interactions" value="52"/>
</dbReference>
<dbReference type="DIP" id="DIP-17846N"/>
<dbReference type="FunCoup" id="Q03017">
    <property type="interactions" value="260"/>
</dbReference>
<dbReference type="IntAct" id="Q03017">
    <property type="interactions" value="13"/>
</dbReference>
<dbReference type="MINT" id="Q03017"/>
<dbReference type="STRING" id="7227.FBpp0089296"/>
<dbReference type="iPTMnet" id="Q03017"/>
<dbReference type="PaxDb" id="7227-FBpp0080402"/>
<dbReference type="EnsemblMetazoa" id="FBtr0080844">
    <molecule id="Q03017-1"/>
    <property type="protein sequence ID" value="FBpp0080402"/>
    <property type="gene ID" value="FBgn0000250"/>
</dbReference>
<dbReference type="EnsemblMetazoa" id="FBtr0080845">
    <molecule id="Q03017-1"/>
    <property type="protein sequence ID" value="FBpp0080403"/>
    <property type="gene ID" value="FBgn0000250"/>
</dbReference>
<dbReference type="EnsemblMetazoa" id="FBtr0080846">
    <molecule id="Q03017-2"/>
    <property type="protein sequence ID" value="FBpp0080404"/>
    <property type="gene ID" value="FBgn0000250"/>
</dbReference>
<dbReference type="EnsemblMetazoa" id="FBtr0080847">
    <molecule id="Q03017-1"/>
    <property type="protein sequence ID" value="FBpp0089296"/>
    <property type="gene ID" value="FBgn0000250"/>
</dbReference>
<dbReference type="EnsemblMetazoa" id="FBtr0337081">
    <molecule id="Q03017-1"/>
    <property type="protein sequence ID" value="FBpp0308004"/>
    <property type="gene ID" value="FBgn0000250"/>
</dbReference>
<dbReference type="GeneID" id="34969"/>
<dbReference type="KEGG" id="dme:Dmel_CG5848"/>
<dbReference type="UCSC" id="CG5848-RA">
    <molecule id="Q03017-1"/>
    <property type="organism name" value="d. melanogaster"/>
</dbReference>
<dbReference type="UCSC" id="CG5848-RD">
    <property type="organism name" value="d. melanogaster"/>
</dbReference>
<dbReference type="AGR" id="FB:FBgn0000250"/>
<dbReference type="CTD" id="34969"/>
<dbReference type="FlyBase" id="FBgn0000250">
    <property type="gene designation" value="cact"/>
</dbReference>
<dbReference type="VEuPathDB" id="VectorBase:FBgn0000250"/>
<dbReference type="eggNOG" id="KOG0504">
    <property type="taxonomic scope" value="Eukaryota"/>
</dbReference>
<dbReference type="GeneTree" id="ENSGT00940000173429"/>
<dbReference type="InParanoid" id="Q03017"/>
<dbReference type="OMA" id="CAANSFD"/>
<dbReference type="OrthoDB" id="20727at2759"/>
<dbReference type="PhylomeDB" id="Q03017"/>
<dbReference type="Reactome" id="R-DME-1169091">
    <property type="pathway name" value="Activation of NF-kappaB in B cells"/>
</dbReference>
<dbReference type="Reactome" id="R-DME-1810476">
    <property type="pathway name" value="RIP-mediated NFkB activation via ZBP1"/>
</dbReference>
<dbReference type="Reactome" id="R-DME-202424">
    <property type="pathway name" value="Downstream TCR signaling"/>
</dbReference>
<dbReference type="Reactome" id="R-DME-209406">
    <property type="pathway name" value="Degradation of NF-kappa-B inhibitor, CACT"/>
</dbReference>
<dbReference type="Reactome" id="R-DME-209560">
    <property type="pathway name" value="NF-kB is activated and signals survival"/>
</dbReference>
<dbReference type="Reactome" id="R-DME-214842">
    <property type="pathway name" value="DL and DIF homodimers bind to TUB and phosphorylated PLL in the TL receptor 'signalling complex'"/>
</dbReference>
<dbReference type="Reactome" id="R-DME-214844">
    <property type="pathway name" value="DL and DIF homodimers complexed with CACT are all phosphorylated in the TL receptor 'signalling complex'"/>
</dbReference>
<dbReference type="Reactome" id="R-DME-214869">
    <property type="pathway name" value="Phosphorylated CACT, DL and DIF homodimers dissociate from the TL receptor 'signalling complex'"/>
</dbReference>
<dbReference type="Reactome" id="R-DME-2871837">
    <property type="pathway name" value="FCERI mediated NF-kB activation"/>
</dbReference>
<dbReference type="Reactome" id="R-DME-445989">
    <property type="pathway name" value="TAK1-dependent IKK and NF-kappa-B activation"/>
</dbReference>
<dbReference type="Reactome" id="R-DME-5607764">
    <property type="pathway name" value="CLEC7A (Dectin-1) signaling"/>
</dbReference>
<dbReference type="Reactome" id="R-DME-9020702">
    <property type="pathway name" value="Interleukin-1 signaling"/>
</dbReference>
<dbReference type="Reactome" id="R-DME-933542">
    <property type="pathway name" value="TRAF6 mediated NF-kB activation"/>
</dbReference>
<dbReference type="Reactome" id="R-DME-9860927">
    <property type="pathway name" value="Turbulent (oscillatory, disturbed) flow shear stress activates signaling by PIEZO1 and integrins in endothelial cells"/>
</dbReference>
<dbReference type="SignaLink" id="Q03017"/>
<dbReference type="BioGRID-ORCS" id="34969">
    <property type="hits" value="0 hits in 3 CRISPR screens"/>
</dbReference>
<dbReference type="GenomeRNAi" id="34969"/>
<dbReference type="PRO" id="PR:Q03017"/>
<dbReference type="Proteomes" id="UP000000803">
    <property type="component" value="Chromosome 2L"/>
</dbReference>
<dbReference type="Bgee" id="FBgn0000250">
    <property type="expression patterns" value="Expressed in egg cell and 251 other cell types or tissues"/>
</dbReference>
<dbReference type="ExpressionAtlas" id="Q03017">
    <property type="expression patterns" value="baseline and differential"/>
</dbReference>
<dbReference type="GO" id="GO:0005737">
    <property type="term" value="C:cytoplasm"/>
    <property type="evidence" value="ECO:0007005"/>
    <property type="project" value="FlyBase"/>
</dbReference>
<dbReference type="GO" id="GO:0005829">
    <property type="term" value="C:cytosol"/>
    <property type="evidence" value="ECO:0000314"/>
    <property type="project" value="FlyBase"/>
</dbReference>
<dbReference type="GO" id="GO:0031594">
    <property type="term" value="C:neuromuscular junction"/>
    <property type="evidence" value="ECO:0000314"/>
    <property type="project" value="FlyBase"/>
</dbReference>
<dbReference type="GO" id="GO:0071212">
    <property type="term" value="C:subsynaptic reticulum"/>
    <property type="evidence" value="ECO:0000314"/>
    <property type="project" value="FlyBase"/>
</dbReference>
<dbReference type="GO" id="GO:0051059">
    <property type="term" value="F:NF-kappaB binding"/>
    <property type="evidence" value="ECO:0000353"/>
    <property type="project" value="FlyBase"/>
</dbReference>
<dbReference type="GO" id="GO:0140311">
    <property type="term" value="F:protein sequestering activity"/>
    <property type="evidence" value="ECO:0000315"/>
    <property type="project" value="FlyBase"/>
</dbReference>
<dbReference type="GO" id="GO:0019730">
    <property type="term" value="P:antimicrobial humoral response"/>
    <property type="evidence" value="ECO:0000270"/>
    <property type="project" value="FlyBase"/>
</dbReference>
<dbReference type="GO" id="GO:0046843">
    <property type="term" value="P:dorsal appendage formation"/>
    <property type="evidence" value="ECO:0007001"/>
    <property type="project" value="FlyBase"/>
</dbReference>
<dbReference type="GO" id="GO:0009950">
    <property type="term" value="P:dorsal/ventral axis specification"/>
    <property type="evidence" value="ECO:0000315"/>
    <property type="project" value="UniProtKB"/>
</dbReference>
<dbReference type="GO" id="GO:0009953">
    <property type="term" value="P:dorsal/ventral pattern formation"/>
    <property type="evidence" value="ECO:0000315"/>
    <property type="project" value="FlyBase"/>
</dbReference>
<dbReference type="GO" id="GO:0002789">
    <property type="term" value="P:negative regulation of antifungal peptide production"/>
    <property type="evidence" value="ECO:0000315"/>
    <property type="project" value="FlyBase"/>
</dbReference>
<dbReference type="GO" id="GO:0043124">
    <property type="term" value="P:negative regulation of canonical NF-kappaB signal transduction"/>
    <property type="evidence" value="ECO:0000315"/>
    <property type="project" value="FlyBase"/>
</dbReference>
<dbReference type="GO" id="GO:0045611">
    <property type="term" value="P:negative regulation of hemocyte differentiation"/>
    <property type="evidence" value="ECO:0000315"/>
    <property type="project" value="FlyBase"/>
</dbReference>
<dbReference type="GO" id="GO:0045751">
    <property type="term" value="P:negative regulation of Toll signaling pathway"/>
    <property type="evidence" value="ECO:0000314"/>
    <property type="project" value="FlyBase"/>
</dbReference>
<dbReference type="GO" id="GO:0048477">
    <property type="term" value="P:oogenesis"/>
    <property type="evidence" value="ECO:0007001"/>
    <property type="project" value="FlyBase"/>
</dbReference>
<dbReference type="FunFam" id="1.25.40.20:FF:000458">
    <property type="entry name" value="NF-kappa-B inhibitor cactus"/>
    <property type="match status" value="1"/>
</dbReference>
<dbReference type="Gene3D" id="1.25.40.20">
    <property type="entry name" value="Ankyrin repeat-containing domain"/>
    <property type="match status" value="1"/>
</dbReference>
<dbReference type="InterPro" id="IPR002110">
    <property type="entry name" value="Ankyrin_rpt"/>
</dbReference>
<dbReference type="InterPro" id="IPR036770">
    <property type="entry name" value="Ankyrin_rpt-contain_sf"/>
</dbReference>
<dbReference type="InterPro" id="IPR051070">
    <property type="entry name" value="NF-kappa-B_inhibitor"/>
</dbReference>
<dbReference type="PANTHER" id="PTHR46680">
    <property type="entry name" value="NF-KAPPA-B INHIBITOR ALPHA"/>
    <property type="match status" value="1"/>
</dbReference>
<dbReference type="PANTHER" id="PTHR46680:SF3">
    <property type="entry name" value="NF-KAPPA-B INHIBITOR CACTUS"/>
    <property type="match status" value="1"/>
</dbReference>
<dbReference type="Pfam" id="PF00023">
    <property type="entry name" value="Ank"/>
    <property type="match status" value="1"/>
</dbReference>
<dbReference type="Pfam" id="PF12796">
    <property type="entry name" value="Ank_2"/>
    <property type="match status" value="2"/>
</dbReference>
<dbReference type="PRINTS" id="PR01415">
    <property type="entry name" value="ANKYRIN"/>
</dbReference>
<dbReference type="SMART" id="SM00248">
    <property type="entry name" value="ANK"/>
    <property type="match status" value="5"/>
</dbReference>
<dbReference type="SUPFAM" id="SSF48403">
    <property type="entry name" value="Ankyrin repeat"/>
    <property type="match status" value="1"/>
</dbReference>
<dbReference type="PROSITE" id="PS50297">
    <property type="entry name" value="ANK_REP_REGION"/>
    <property type="match status" value="1"/>
</dbReference>
<dbReference type="PROSITE" id="PS50088">
    <property type="entry name" value="ANK_REPEAT"/>
    <property type="match status" value="4"/>
</dbReference>
<sequence>MPSPTKAAEAATKATATSDCSCSAASVEQRAPSNAANPSSSLATSGKIGGKTQDQTAAINKQKEFAVPNETSDSGFISGPQSSQIFSEEIVPDSEEQDKDQQESAPQKEQPVVLDSGIIDEEEDQEEQEKEEEHQDTTTATADSMRLKHSADTGIPQWTVESHLVSRGEQLNNLGQSSSTQITGRSKVQSSTASTANANPSGSGATSSAPPSSINIMNAWEQFYQQNDDGDTPLHLACISGSVDVVAALIRMAPHPCLLNIQNDVAQTPLHLAALTAQPNIMRILLLAGAEPTVRDRHGNTALHLSCIAGEKQCVRALTEKFGATEIHEAHRQYGHRSNDKAVSSLSYACLPADLEIRNYDGERCVHLAAEAGHIDILRILVSHGADINAREGKSGRTPLHIAIEGCNEDLANFLLDECEKLNLETATYAGLTAYQFACIMNKSRMQNILEKRGAETVTPPDSDYDSSDIEDLDDTKMYDRFGDPRYFVSYNGGNPMTVA</sequence>
<organism>
    <name type="scientific">Drosophila melanogaster</name>
    <name type="common">Fruit fly</name>
    <dbReference type="NCBI Taxonomy" id="7227"/>
    <lineage>
        <taxon>Eukaryota</taxon>
        <taxon>Metazoa</taxon>
        <taxon>Ecdysozoa</taxon>
        <taxon>Arthropoda</taxon>
        <taxon>Hexapoda</taxon>
        <taxon>Insecta</taxon>
        <taxon>Pterygota</taxon>
        <taxon>Neoptera</taxon>
        <taxon>Endopterygota</taxon>
        <taxon>Diptera</taxon>
        <taxon>Brachycera</taxon>
        <taxon>Muscomorpha</taxon>
        <taxon>Ephydroidea</taxon>
        <taxon>Drosophilidae</taxon>
        <taxon>Drosophila</taxon>
        <taxon>Sophophora</taxon>
    </lineage>
</organism>
<evidence type="ECO:0000255" key="1"/>
<evidence type="ECO:0000256" key="2">
    <source>
        <dbReference type="SAM" id="MobiDB-lite"/>
    </source>
</evidence>
<evidence type="ECO:0000269" key="3">
    <source>
    </source>
</evidence>
<evidence type="ECO:0000269" key="4">
    <source>
    </source>
</evidence>
<evidence type="ECO:0000269" key="5">
    <source>
    </source>
</evidence>
<evidence type="ECO:0000269" key="6">
    <source>
    </source>
</evidence>
<evidence type="ECO:0000269" key="7">
    <source>
    </source>
</evidence>
<evidence type="ECO:0000305" key="8"/>
<name>CACT_DROME</name>
<reference key="1">
    <citation type="journal article" date="1992" name="Cell">
        <title>Cactus, a gene involved in dorsoventral pattern formation of Drosophila, is related to the I kappa B gene family of vertebrates.</title>
        <authorList>
            <person name="Geisler R."/>
            <person name="Bergmann A."/>
            <person name="Hiromi Y."/>
            <person name="Nuesslein-Volhard C."/>
        </authorList>
    </citation>
    <scope>NUCLEOTIDE SEQUENCE [MRNA] (ISOFORM A)</scope>
    <scope>FUNCTION</scope>
    <scope>SUBCELLULAR LOCATION</scope>
</reference>
<reference key="2">
    <citation type="journal article" date="1992" name="Cell">
        <title>Characterization of the Drosophila cactus locus and analysis of interactions between cactus and dorsal proteins.</title>
        <authorList>
            <person name="Kidd S."/>
        </authorList>
    </citation>
    <scope>NUCLEOTIDE SEQUENCE [GENOMIC DNA]</scope>
    <scope>FUNCTION</scope>
    <scope>DEVELOPMENTAL STAGE</scope>
    <scope>INTERACTION WITH DL</scope>
    <scope>ALTERNATIVE SPLICING (ISOFORMS A AND C)</scope>
    <source>
        <strain>Oregon-R</strain>
        <tissue>Embryo</tissue>
    </source>
</reference>
<reference key="3">
    <citation type="journal article" date="1999" name="Genetics">
        <title>An exploration of the sequence of a 2.9-Mb region of the genome of Drosophila melanogaster: the Adh region.</title>
        <authorList>
            <person name="Ashburner M."/>
            <person name="Misra S."/>
            <person name="Roote J."/>
            <person name="Lewis S.E."/>
            <person name="Blazej R.G."/>
            <person name="Davis T."/>
            <person name="Doyle C."/>
            <person name="Galle R.F."/>
            <person name="George R.A."/>
            <person name="Harris N.L."/>
            <person name="Hartzell G."/>
            <person name="Harvey D.A."/>
            <person name="Hong L."/>
            <person name="Houston K.A."/>
            <person name="Hoskins R.A."/>
            <person name="Johnson G."/>
            <person name="Martin C."/>
            <person name="Moshrefi A.R."/>
            <person name="Palazzolo M."/>
            <person name="Reese M.G."/>
            <person name="Spradling A.C."/>
            <person name="Tsang G."/>
            <person name="Wan K.H."/>
            <person name="Whitelaw K."/>
            <person name="Celniker S.E."/>
            <person name="Rubin G.M."/>
        </authorList>
    </citation>
    <scope>NUCLEOTIDE SEQUENCE [LARGE SCALE GENOMIC DNA]</scope>
    <source>
        <strain>Berkeley</strain>
    </source>
</reference>
<reference key="4">
    <citation type="journal article" date="2000" name="Science">
        <title>The genome sequence of Drosophila melanogaster.</title>
        <authorList>
            <person name="Adams M.D."/>
            <person name="Celniker S.E."/>
            <person name="Holt R.A."/>
            <person name="Evans C.A."/>
            <person name="Gocayne J.D."/>
            <person name="Amanatides P.G."/>
            <person name="Scherer S.E."/>
            <person name="Li P.W."/>
            <person name="Hoskins R.A."/>
            <person name="Galle R.F."/>
            <person name="George R.A."/>
            <person name="Lewis S.E."/>
            <person name="Richards S."/>
            <person name="Ashburner M."/>
            <person name="Henderson S.N."/>
            <person name="Sutton G.G."/>
            <person name="Wortman J.R."/>
            <person name="Yandell M.D."/>
            <person name="Zhang Q."/>
            <person name="Chen L.X."/>
            <person name="Brandon R.C."/>
            <person name="Rogers Y.-H.C."/>
            <person name="Blazej R.G."/>
            <person name="Champe M."/>
            <person name="Pfeiffer B.D."/>
            <person name="Wan K.H."/>
            <person name="Doyle C."/>
            <person name="Baxter E.G."/>
            <person name="Helt G."/>
            <person name="Nelson C.R."/>
            <person name="Miklos G.L.G."/>
            <person name="Abril J.F."/>
            <person name="Agbayani A."/>
            <person name="An H.-J."/>
            <person name="Andrews-Pfannkoch C."/>
            <person name="Baldwin D."/>
            <person name="Ballew R.M."/>
            <person name="Basu A."/>
            <person name="Baxendale J."/>
            <person name="Bayraktaroglu L."/>
            <person name="Beasley E.M."/>
            <person name="Beeson K.Y."/>
            <person name="Benos P.V."/>
            <person name="Berman B.P."/>
            <person name="Bhandari D."/>
            <person name="Bolshakov S."/>
            <person name="Borkova D."/>
            <person name="Botchan M.R."/>
            <person name="Bouck J."/>
            <person name="Brokstein P."/>
            <person name="Brottier P."/>
            <person name="Burtis K.C."/>
            <person name="Busam D.A."/>
            <person name="Butler H."/>
            <person name="Cadieu E."/>
            <person name="Center A."/>
            <person name="Chandra I."/>
            <person name="Cherry J.M."/>
            <person name="Cawley S."/>
            <person name="Dahlke C."/>
            <person name="Davenport L.B."/>
            <person name="Davies P."/>
            <person name="de Pablos B."/>
            <person name="Delcher A."/>
            <person name="Deng Z."/>
            <person name="Mays A.D."/>
            <person name="Dew I."/>
            <person name="Dietz S.M."/>
            <person name="Dodson K."/>
            <person name="Doup L.E."/>
            <person name="Downes M."/>
            <person name="Dugan-Rocha S."/>
            <person name="Dunkov B.C."/>
            <person name="Dunn P."/>
            <person name="Durbin K.J."/>
            <person name="Evangelista C.C."/>
            <person name="Ferraz C."/>
            <person name="Ferriera S."/>
            <person name="Fleischmann W."/>
            <person name="Fosler C."/>
            <person name="Gabrielian A.E."/>
            <person name="Garg N.S."/>
            <person name="Gelbart W.M."/>
            <person name="Glasser K."/>
            <person name="Glodek A."/>
            <person name="Gong F."/>
            <person name="Gorrell J.H."/>
            <person name="Gu Z."/>
            <person name="Guan P."/>
            <person name="Harris M."/>
            <person name="Harris N.L."/>
            <person name="Harvey D.A."/>
            <person name="Heiman T.J."/>
            <person name="Hernandez J.R."/>
            <person name="Houck J."/>
            <person name="Hostin D."/>
            <person name="Houston K.A."/>
            <person name="Howland T.J."/>
            <person name="Wei M.-H."/>
            <person name="Ibegwam C."/>
            <person name="Jalali M."/>
            <person name="Kalush F."/>
            <person name="Karpen G.H."/>
            <person name="Ke Z."/>
            <person name="Kennison J.A."/>
            <person name="Ketchum K.A."/>
            <person name="Kimmel B.E."/>
            <person name="Kodira C.D."/>
            <person name="Kraft C.L."/>
            <person name="Kravitz S."/>
            <person name="Kulp D."/>
            <person name="Lai Z."/>
            <person name="Lasko P."/>
            <person name="Lei Y."/>
            <person name="Levitsky A.A."/>
            <person name="Li J.H."/>
            <person name="Li Z."/>
            <person name="Liang Y."/>
            <person name="Lin X."/>
            <person name="Liu X."/>
            <person name="Mattei B."/>
            <person name="McIntosh T.C."/>
            <person name="McLeod M.P."/>
            <person name="McPherson D."/>
            <person name="Merkulov G."/>
            <person name="Milshina N.V."/>
            <person name="Mobarry C."/>
            <person name="Morris J."/>
            <person name="Moshrefi A."/>
            <person name="Mount S.M."/>
            <person name="Moy M."/>
            <person name="Murphy B."/>
            <person name="Murphy L."/>
            <person name="Muzny D.M."/>
            <person name="Nelson D.L."/>
            <person name="Nelson D.R."/>
            <person name="Nelson K.A."/>
            <person name="Nixon K."/>
            <person name="Nusskern D.R."/>
            <person name="Pacleb J.M."/>
            <person name="Palazzolo M."/>
            <person name="Pittman G.S."/>
            <person name="Pan S."/>
            <person name="Pollard J."/>
            <person name="Puri V."/>
            <person name="Reese M.G."/>
            <person name="Reinert K."/>
            <person name="Remington K."/>
            <person name="Saunders R.D.C."/>
            <person name="Scheeler F."/>
            <person name="Shen H."/>
            <person name="Shue B.C."/>
            <person name="Siden-Kiamos I."/>
            <person name="Simpson M."/>
            <person name="Skupski M.P."/>
            <person name="Smith T.J."/>
            <person name="Spier E."/>
            <person name="Spradling A.C."/>
            <person name="Stapleton M."/>
            <person name="Strong R."/>
            <person name="Sun E."/>
            <person name="Svirskas R."/>
            <person name="Tector C."/>
            <person name="Turner R."/>
            <person name="Venter E."/>
            <person name="Wang A.H."/>
            <person name="Wang X."/>
            <person name="Wang Z.-Y."/>
            <person name="Wassarman D.A."/>
            <person name="Weinstock G.M."/>
            <person name="Weissenbach J."/>
            <person name="Williams S.M."/>
            <person name="Woodage T."/>
            <person name="Worley K.C."/>
            <person name="Wu D."/>
            <person name="Yang S."/>
            <person name="Yao Q.A."/>
            <person name="Ye J."/>
            <person name="Yeh R.-F."/>
            <person name="Zaveri J.S."/>
            <person name="Zhan M."/>
            <person name="Zhang G."/>
            <person name="Zhao Q."/>
            <person name="Zheng L."/>
            <person name="Zheng X.H."/>
            <person name="Zhong F.N."/>
            <person name="Zhong W."/>
            <person name="Zhou X."/>
            <person name="Zhu S.C."/>
            <person name="Zhu X."/>
            <person name="Smith H.O."/>
            <person name="Gibbs R.A."/>
            <person name="Myers E.W."/>
            <person name="Rubin G.M."/>
            <person name="Venter J.C."/>
        </authorList>
    </citation>
    <scope>NUCLEOTIDE SEQUENCE [LARGE SCALE GENOMIC DNA]</scope>
    <source>
        <strain>Berkeley</strain>
    </source>
</reference>
<reference key="5">
    <citation type="journal article" date="2002" name="Genome Biol.">
        <title>Annotation of the Drosophila melanogaster euchromatic genome: a systematic review.</title>
        <authorList>
            <person name="Misra S."/>
            <person name="Crosby M.A."/>
            <person name="Mungall C.J."/>
            <person name="Matthews B.B."/>
            <person name="Campbell K.S."/>
            <person name="Hradecky P."/>
            <person name="Huang Y."/>
            <person name="Kaminker J.S."/>
            <person name="Millburn G.H."/>
            <person name="Prochnik S.E."/>
            <person name="Smith C.D."/>
            <person name="Tupy J.L."/>
            <person name="Whitfield E.J."/>
            <person name="Bayraktaroglu L."/>
            <person name="Berman B.P."/>
            <person name="Bettencourt B.R."/>
            <person name="Celniker S.E."/>
            <person name="de Grey A.D.N.J."/>
            <person name="Drysdale R.A."/>
            <person name="Harris N.L."/>
            <person name="Richter J."/>
            <person name="Russo S."/>
            <person name="Schroeder A.J."/>
            <person name="Shu S.Q."/>
            <person name="Stapleton M."/>
            <person name="Yamada C."/>
            <person name="Ashburner M."/>
            <person name="Gelbart W.M."/>
            <person name="Rubin G.M."/>
            <person name="Lewis S.E."/>
        </authorList>
    </citation>
    <scope>GENOME REANNOTATION</scope>
    <scope>ALTERNATIVE SPLICING</scope>
    <source>
        <strain>Berkeley</strain>
    </source>
</reference>
<reference key="6">
    <citation type="journal article" date="2002" name="Genome Biol.">
        <title>A Drosophila full-length cDNA resource.</title>
        <authorList>
            <person name="Stapleton M."/>
            <person name="Carlson J.W."/>
            <person name="Brokstein P."/>
            <person name="Yu C."/>
            <person name="Champe M."/>
            <person name="George R.A."/>
            <person name="Guarin H."/>
            <person name="Kronmiller B."/>
            <person name="Pacleb J.M."/>
            <person name="Park S."/>
            <person name="Wan K.H."/>
            <person name="Rubin G.M."/>
            <person name="Celniker S.E."/>
        </authorList>
    </citation>
    <scope>NUCLEOTIDE SEQUENCE [LARGE SCALE MRNA] (ISOFORM A)</scope>
    <source>
        <strain>Berkeley</strain>
        <tissue>Embryo</tissue>
    </source>
</reference>
<reference key="7">
    <citation type="journal article" date="2000" name="J. Biol. Chem.">
        <title>Lipopolysaccharide-activated kinase, an essential component for the induction of the antimicrobial peptide genes in Drosophila melanogaster cells.</title>
        <authorList>
            <person name="Kim Y.-S."/>
            <person name="Han S.-J."/>
            <person name="Ryu J.-H."/>
            <person name="Choi K.-H."/>
            <person name="Hong Y.-S."/>
            <person name="Chung Y.-H."/>
            <person name="Perrot S."/>
            <person name="Raibaud A."/>
            <person name="Brey P.T."/>
            <person name="Lee W.-J."/>
        </authorList>
    </citation>
    <scope>FUNCTION</scope>
    <scope>INTERACTION WITH IKKBETA</scope>
    <scope>PHOSPHORYLATION</scope>
</reference>
<reference key="8">
    <citation type="journal article" date="2000" name="Mech. Dev.">
        <title>Cactin, a conserved protein that interacts with the Drosophila IkappaB protein cactus and modulates its function.</title>
        <authorList>
            <person name="Lin P."/>
            <person name="Huang L.H."/>
            <person name="Steward R."/>
        </authorList>
    </citation>
    <scope>FUNCTION</scope>
    <scope>INTERACTION WITH CACTIN</scope>
</reference>
<reference key="9">
    <citation type="journal article" date="2000" name="Science">
        <title>A subclass of Ras proteins that regulate the degradation of IkappaB.</title>
        <authorList>
            <person name="Fenwick C."/>
            <person name="Na S.-Y."/>
            <person name="Voll R.E."/>
            <person name="Zhong H."/>
            <person name="Im S.-Y."/>
            <person name="Lee J.W."/>
            <person name="Ghosh S."/>
        </authorList>
    </citation>
    <scope>INTERACTION WITH KAPPA-B-RAS</scope>
</reference>
<proteinExistence type="evidence at protein level"/>
<accession>Q03017</accession>
<accession>A4V0S3</accession>
<accession>Q0E8Q3</accession>
<accession>Q9V3M6</accession>
<gene>
    <name type="primary">cact</name>
    <name type="ORF">CG5848</name>
</gene>
<comment type="function">
    <text evidence="3 5 6 7">Involved in the formation of the dorsoventral pattern. It inhibits nuclear translocation of the dorsal morphogen in the dorsal region of the embryo. Acts as a negative regulator of the NF-kappa-B (rel) signaling pathway. Cact is degraded by IKKbeta, this is essential for NF-kappa-B (rel) activation.</text>
</comment>
<comment type="subunit">
    <text evidence="3 4 5 7">Phosphorylated isoform A binds to dorsal (dl); inhibits dl translocation to the nucleus and therefore from binding to DNA. In vitro, interacts with IKKbeta. Interacts with cactin and kappa-B-Ras.</text>
</comment>
<comment type="interaction">
    <interactant intactId="EBI-200600">
        <id>Q03017</id>
    </interactant>
    <interactant intactId="EBI-175417">
        <id>Q9VR99</id>
        <label>cactin</label>
    </interactant>
    <organismsDiffer>false</organismsDiffer>
    <experiments>5</experiments>
</comment>
<comment type="interaction">
    <interactant intactId="EBI-200600">
        <id>Q03017</id>
    </interactant>
    <interactant intactId="EBI-198375">
        <id>P15330</id>
        <label>dl</label>
    </interactant>
    <organismsDiffer>false</organismsDiffer>
    <experiments>6</experiments>
</comment>
<comment type="interaction">
    <interactant intactId="EBI-200600">
        <id>Q03017</id>
    </interactant>
    <interactant intactId="EBI-148871">
        <id>Q9VEZ5</id>
        <label>IKKbeta</label>
    </interactant>
    <organismsDiffer>false</organismsDiffer>
    <experiments>2</experiments>
</comment>
<comment type="interaction">
    <interactant intactId="EBI-200600">
        <id>Q03017</id>
    </interactant>
    <interactant intactId="EBI-100228">
        <id>Q9V393</id>
        <label>krz</label>
    </interactant>
    <organismsDiffer>false</organismsDiffer>
    <experiments>2</experiments>
</comment>
<comment type="subcellular location">
    <subcellularLocation>
        <location evidence="6">Cytoplasm</location>
    </subcellularLocation>
</comment>
<comment type="alternative products">
    <event type="alternative splicing"/>
    <isoform>
        <id>Q03017-1</id>
        <name>A</name>
        <name>B</name>
        <name>D</name>
        <name>Maternal/zygotic</name>
        <sequence type="displayed"/>
    </isoform>
    <isoform>
        <id>Q03017-2</id>
        <name>C</name>
        <name>Zygotic</name>
        <sequence type="described" ref="VSP_000286"/>
    </isoform>
</comment>
<comment type="tissue specificity">
    <text>Expressed in ovary (at protein level).</text>
</comment>
<comment type="developmental stage">
    <text evidence="7">Expressed during embryogenesis (at protein level). Isoform A is expressed in ovaries and 0-1 hour embryos. After 2-3 hours unphosphorylated zygotic protein is expressed. Between 4-8 hours phosphorylated zygotic protein is expressed. After 12 hours the amount of unphosphorylated zygotic protein increases until, by the end of embryogenesis, it is the most abundant form of cactus.</text>
</comment>
<comment type="PTM">
    <text evidence="3">Activated IKKbeta phosphorylates cact.</text>
</comment>
<comment type="similarity">
    <text evidence="8">Belongs to the NF-kappa-B inhibitor family.</text>
</comment>